<comment type="function">
    <text evidence="1">Catalyzes the conversion of butyryl-CoA through butyryl phosphate to butyrate.</text>
</comment>
<comment type="catalytic activity">
    <reaction>
        <text>butanoate + ATP = butanoyl phosphate + ADP</text>
        <dbReference type="Rhea" id="RHEA:13585"/>
        <dbReference type="ChEBI" id="CHEBI:17968"/>
        <dbReference type="ChEBI" id="CHEBI:30616"/>
        <dbReference type="ChEBI" id="CHEBI:58079"/>
        <dbReference type="ChEBI" id="CHEBI:456216"/>
        <dbReference type="EC" id="2.7.2.7"/>
    </reaction>
</comment>
<comment type="pathway">
    <text>Lipid metabolism; butanoate metabolism.</text>
</comment>
<comment type="subcellular location">
    <subcellularLocation>
        <location evidence="1">Cytoplasm</location>
    </subcellularLocation>
</comment>
<comment type="similarity">
    <text evidence="2">Belongs to the acetokinase family.</text>
</comment>
<gene>
    <name type="primary">buk</name>
    <name type="synonym">bukA</name>
    <name type="ordered locus">CPF_2656</name>
</gene>
<name>BUK_CLOP1</name>
<feature type="chain" id="PRO_0000273580" description="Butyrate kinase">
    <location>
        <begin position="1"/>
        <end position="356"/>
    </location>
</feature>
<protein>
    <recommendedName>
        <fullName>Butyrate kinase</fullName>
        <shortName>BK</shortName>
        <ecNumber>2.7.2.7</ecNumber>
    </recommendedName>
</protein>
<keyword id="KW-0067">ATP-binding</keyword>
<keyword id="KW-0963">Cytoplasm</keyword>
<keyword id="KW-0418">Kinase</keyword>
<keyword id="KW-0547">Nucleotide-binding</keyword>
<keyword id="KW-0808">Transferase</keyword>
<evidence type="ECO:0000250" key="1"/>
<evidence type="ECO:0000305" key="2"/>
<sequence>MAYKLLIINPGSTSTKIGVYEGEKEILEETLRHSAEEILKYDTIFDQLDFRKEVILKVLKEKGIDINELDAVVGRGGMLKPIEGGTYEVNEAMVEDLKIGVQGPHASNLGGILSNEIAKEIGKRAFIVDPVVVDEMEDVARLSGVPELPRKSKFHALNQKAVAKRYAKEHNTSYEDVNLIVVHMGGGVSVGAHRKGRVIDVNNALDGDGPFSPERAGGVPSGELLEMCFSGKYSKEEVYKKLVGKGGFVAYANTNDARDLIKLSQEGDEKGSLIFNAFIYQIAKEIGSMAVVLDGEVDAIVLTGGIAYSDYVTNAINKKVKWIAPMVVYGGEDELLALAQGAIRVLDGVEEAKIYK</sequence>
<organism>
    <name type="scientific">Clostridium perfringens (strain ATCC 13124 / DSM 756 / JCM 1290 / NCIMB 6125 / NCTC 8237 / Type A)</name>
    <dbReference type="NCBI Taxonomy" id="195103"/>
    <lineage>
        <taxon>Bacteria</taxon>
        <taxon>Bacillati</taxon>
        <taxon>Bacillota</taxon>
        <taxon>Clostridia</taxon>
        <taxon>Eubacteriales</taxon>
        <taxon>Clostridiaceae</taxon>
        <taxon>Clostridium</taxon>
    </lineage>
</organism>
<accession>Q0TMV4</accession>
<accession>Q9ZNE5</accession>
<dbReference type="EC" id="2.7.2.7"/>
<dbReference type="EMBL" id="AB016775">
    <property type="protein sequence ID" value="BAA74725.1"/>
    <property type="molecule type" value="Genomic_DNA"/>
</dbReference>
<dbReference type="EMBL" id="AB035092">
    <property type="protein sequence ID" value="BAA95935.1"/>
    <property type="molecule type" value="Genomic_DNA"/>
</dbReference>
<dbReference type="EMBL" id="CP000246">
    <property type="protein sequence ID" value="ABG83930.1"/>
    <property type="molecule type" value="Genomic_DNA"/>
</dbReference>
<dbReference type="RefSeq" id="WP_003454444.1">
    <property type="nucleotide sequence ID" value="NC_008261.1"/>
</dbReference>
<dbReference type="SMR" id="Q0TMV4"/>
<dbReference type="STRING" id="195103.CPF_2656"/>
<dbReference type="PaxDb" id="195103-CPF_2656"/>
<dbReference type="GeneID" id="93001066"/>
<dbReference type="KEGG" id="cpf:CPF_2656"/>
<dbReference type="eggNOG" id="COG3426">
    <property type="taxonomic scope" value="Bacteria"/>
</dbReference>
<dbReference type="HOGENOM" id="CLU_048716_0_0_9"/>
<dbReference type="UniPathway" id="UPA00863"/>
<dbReference type="Proteomes" id="UP000001823">
    <property type="component" value="Chromosome"/>
</dbReference>
<dbReference type="GO" id="GO:0005737">
    <property type="term" value="C:cytoplasm"/>
    <property type="evidence" value="ECO:0007669"/>
    <property type="project" value="UniProtKB-SubCell"/>
</dbReference>
<dbReference type="GO" id="GO:0008776">
    <property type="term" value="F:acetate kinase activity"/>
    <property type="evidence" value="ECO:0007669"/>
    <property type="project" value="TreeGrafter"/>
</dbReference>
<dbReference type="GO" id="GO:0005524">
    <property type="term" value="F:ATP binding"/>
    <property type="evidence" value="ECO:0007669"/>
    <property type="project" value="UniProtKB-KW"/>
</dbReference>
<dbReference type="GO" id="GO:0047761">
    <property type="term" value="F:butyrate kinase activity"/>
    <property type="evidence" value="ECO:0007669"/>
    <property type="project" value="UniProtKB-UniRule"/>
</dbReference>
<dbReference type="GO" id="GO:0006083">
    <property type="term" value="P:acetate metabolic process"/>
    <property type="evidence" value="ECO:0007669"/>
    <property type="project" value="TreeGrafter"/>
</dbReference>
<dbReference type="GO" id="GO:0019605">
    <property type="term" value="P:butyrate metabolic process"/>
    <property type="evidence" value="ECO:0007669"/>
    <property type="project" value="UniProtKB-UniPathway"/>
</dbReference>
<dbReference type="CDD" id="cd24011">
    <property type="entry name" value="ASKHA_NBD_BK"/>
    <property type="match status" value="1"/>
</dbReference>
<dbReference type="Gene3D" id="3.30.420.40">
    <property type="match status" value="2"/>
</dbReference>
<dbReference type="HAMAP" id="MF_00542">
    <property type="entry name" value="Butyrate_kinase"/>
    <property type="match status" value="1"/>
</dbReference>
<dbReference type="InterPro" id="IPR000890">
    <property type="entry name" value="Aliphatic_acid_kin_short-chain"/>
</dbReference>
<dbReference type="InterPro" id="IPR023865">
    <property type="entry name" value="Aliphatic_acid_kinase_CS"/>
</dbReference>
<dbReference type="InterPro" id="IPR043129">
    <property type="entry name" value="ATPase_NBD"/>
</dbReference>
<dbReference type="InterPro" id="IPR011245">
    <property type="entry name" value="Butyrate_kin"/>
</dbReference>
<dbReference type="NCBIfam" id="TIGR02707">
    <property type="entry name" value="butyr_kinase"/>
    <property type="match status" value="1"/>
</dbReference>
<dbReference type="NCBIfam" id="NF002834">
    <property type="entry name" value="PRK03011.1-5"/>
    <property type="match status" value="1"/>
</dbReference>
<dbReference type="PANTHER" id="PTHR21060">
    <property type="entry name" value="ACETATE KINASE"/>
    <property type="match status" value="1"/>
</dbReference>
<dbReference type="PANTHER" id="PTHR21060:SF3">
    <property type="entry name" value="BUTYRATE KINASE 2-RELATED"/>
    <property type="match status" value="1"/>
</dbReference>
<dbReference type="Pfam" id="PF00871">
    <property type="entry name" value="Acetate_kinase"/>
    <property type="match status" value="1"/>
</dbReference>
<dbReference type="PIRSF" id="PIRSF036458">
    <property type="entry name" value="Butyrate_kin"/>
    <property type="match status" value="1"/>
</dbReference>
<dbReference type="PRINTS" id="PR00471">
    <property type="entry name" value="ACETATEKNASE"/>
</dbReference>
<dbReference type="SUPFAM" id="SSF53067">
    <property type="entry name" value="Actin-like ATPase domain"/>
    <property type="match status" value="2"/>
</dbReference>
<dbReference type="PROSITE" id="PS01075">
    <property type="entry name" value="ACETATE_KINASE_1"/>
    <property type="match status" value="1"/>
</dbReference>
<dbReference type="PROSITE" id="PS01076">
    <property type="entry name" value="ACETATE_KINASE_2"/>
    <property type="match status" value="1"/>
</dbReference>
<reference key="1">
    <citation type="journal article" date="1999" name="FEMS Microbiol. Lett.">
        <title>The hydA gene encoding the H(2)-evolving hydrogenase of Clostridium perfringens: molecular characterization and expression of the gene.</title>
        <authorList>
            <person name="Kaji M."/>
            <person name="Taniguchi Y."/>
            <person name="Matsushita O."/>
            <person name="Katayama S."/>
            <person name="Miyata S."/>
            <person name="Morita S."/>
            <person name="Okabe A."/>
        </authorList>
    </citation>
    <scope>NUCLEOTIDE SEQUENCE [GENOMIC DNA]</scope>
</reference>
<reference key="2">
    <citation type="journal article" date="2006" name="Genome Res.">
        <title>Skewed genomic variability in strains of the toxigenic bacterial pathogen, Clostridium perfringens.</title>
        <authorList>
            <person name="Myers G.S.A."/>
            <person name="Rasko D.A."/>
            <person name="Cheung J.K."/>
            <person name="Ravel J."/>
            <person name="Seshadri R."/>
            <person name="DeBoy R.T."/>
            <person name="Ren Q."/>
            <person name="Varga J."/>
            <person name="Awad M.M."/>
            <person name="Brinkac L.M."/>
            <person name="Daugherty S.C."/>
            <person name="Haft D.H."/>
            <person name="Dodson R.J."/>
            <person name="Madupu R."/>
            <person name="Nelson W.C."/>
            <person name="Rosovitz M.J."/>
            <person name="Sullivan S.A."/>
            <person name="Khouri H."/>
            <person name="Dimitrov G.I."/>
            <person name="Watkins K.L."/>
            <person name="Mulligan S."/>
            <person name="Benton J."/>
            <person name="Radune D."/>
            <person name="Fisher D.J."/>
            <person name="Atkins H.S."/>
            <person name="Hiscox T."/>
            <person name="Jost B.H."/>
            <person name="Billington S.J."/>
            <person name="Songer J.G."/>
            <person name="McClane B.A."/>
            <person name="Titball R.W."/>
            <person name="Rood J.I."/>
            <person name="Melville S.B."/>
            <person name="Paulsen I.T."/>
        </authorList>
    </citation>
    <scope>NUCLEOTIDE SEQUENCE [LARGE SCALE GENOMIC DNA]</scope>
    <source>
        <strain>ATCC 13124 / DSM 756 / JCM 1290 / NCIMB 6125 / NCTC 8237 / S 107 / Type A</strain>
    </source>
</reference>
<proteinExistence type="inferred from homology"/>